<gene>
    <name evidence="1" type="primary">pth</name>
    <name type="ordered locus">ETA_18850</name>
</gene>
<organism>
    <name type="scientific">Erwinia tasmaniensis (strain DSM 17950 / CFBP 7177 / CIP 109463 / NCPPB 4357 / Et1/99)</name>
    <dbReference type="NCBI Taxonomy" id="465817"/>
    <lineage>
        <taxon>Bacteria</taxon>
        <taxon>Pseudomonadati</taxon>
        <taxon>Pseudomonadota</taxon>
        <taxon>Gammaproteobacteria</taxon>
        <taxon>Enterobacterales</taxon>
        <taxon>Erwiniaceae</taxon>
        <taxon>Erwinia</taxon>
    </lineage>
</organism>
<accession>B2VEI9</accession>
<name>PTH_ERWT9</name>
<feature type="chain" id="PRO_1000092940" description="Peptidyl-tRNA hydrolase">
    <location>
        <begin position="1"/>
        <end position="195"/>
    </location>
</feature>
<feature type="active site" description="Proton acceptor" evidence="1">
    <location>
        <position position="22"/>
    </location>
</feature>
<feature type="binding site" evidence="1">
    <location>
        <position position="17"/>
    </location>
    <ligand>
        <name>tRNA</name>
        <dbReference type="ChEBI" id="CHEBI:17843"/>
    </ligand>
</feature>
<feature type="binding site" evidence="1">
    <location>
        <position position="68"/>
    </location>
    <ligand>
        <name>tRNA</name>
        <dbReference type="ChEBI" id="CHEBI:17843"/>
    </ligand>
</feature>
<feature type="binding site" evidence="1">
    <location>
        <position position="70"/>
    </location>
    <ligand>
        <name>tRNA</name>
        <dbReference type="ChEBI" id="CHEBI:17843"/>
    </ligand>
</feature>
<feature type="binding site" evidence="1">
    <location>
        <position position="116"/>
    </location>
    <ligand>
        <name>tRNA</name>
        <dbReference type="ChEBI" id="CHEBI:17843"/>
    </ligand>
</feature>
<feature type="site" description="Discriminates between blocked and unblocked aminoacyl-tRNA" evidence="1">
    <location>
        <position position="12"/>
    </location>
</feature>
<feature type="site" description="Stabilizes the basic form of H active site to accept a proton" evidence="1">
    <location>
        <position position="95"/>
    </location>
</feature>
<evidence type="ECO:0000255" key="1">
    <source>
        <dbReference type="HAMAP-Rule" id="MF_00083"/>
    </source>
</evidence>
<protein>
    <recommendedName>
        <fullName evidence="1">Peptidyl-tRNA hydrolase</fullName>
        <shortName evidence="1">Pth</shortName>
        <ecNumber evidence="1">3.1.1.29</ecNumber>
    </recommendedName>
</protein>
<comment type="function">
    <text evidence="1">Hydrolyzes ribosome-free peptidyl-tRNAs (with 1 or more amino acids incorporated), which drop off the ribosome during protein synthesis, or as a result of ribosome stalling.</text>
</comment>
<comment type="function">
    <text evidence="1">Catalyzes the release of premature peptidyl moieties from peptidyl-tRNA molecules trapped in stalled 50S ribosomal subunits, and thus maintains levels of free tRNAs and 50S ribosomes.</text>
</comment>
<comment type="catalytic activity">
    <reaction evidence="1">
        <text>an N-acyl-L-alpha-aminoacyl-tRNA + H2O = an N-acyl-L-amino acid + a tRNA + H(+)</text>
        <dbReference type="Rhea" id="RHEA:54448"/>
        <dbReference type="Rhea" id="RHEA-COMP:10123"/>
        <dbReference type="Rhea" id="RHEA-COMP:13883"/>
        <dbReference type="ChEBI" id="CHEBI:15377"/>
        <dbReference type="ChEBI" id="CHEBI:15378"/>
        <dbReference type="ChEBI" id="CHEBI:59874"/>
        <dbReference type="ChEBI" id="CHEBI:78442"/>
        <dbReference type="ChEBI" id="CHEBI:138191"/>
        <dbReference type="EC" id="3.1.1.29"/>
    </reaction>
</comment>
<comment type="subunit">
    <text evidence="1">Monomer.</text>
</comment>
<comment type="subcellular location">
    <subcellularLocation>
        <location evidence="1">Cytoplasm</location>
    </subcellularLocation>
</comment>
<comment type="similarity">
    <text evidence="1">Belongs to the PTH family.</text>
</comment>
<keyword id="KW-0963">Cytoplasm</keyword>
<keyword id="KW-0378">Hydrolase</keyword>
<keyword id="KW-1185">Reference proteome</keyword>
<keyword id="KW-0694">RNA-binding</keyword>
<keyword id="KW-0820">tRNA-binding</keyword>
<reference key="1">
    <citation type="journal article" date="2008" name="Environ. Microbiol.">
        <title>The genome of Erwinia tasmaniensis strain Et1/99, a non-pathogenic bacterium in the genus Erwinia.</title>
        <authorList>
            <person name="Kube M."/>
            <person name="Migdoll A.M."/>
            <person name="Mueller I."/>
            <person name="Kuhl H."/>
            <person name="Beck A."/>
            <person name="Reinhardt R."/>
            <person name="Geider K."/>
        </authorList>
    </citation>
    <scope>NUCLEOTIDE SEQUENCE [LARGE SCALE GENOMIC DNA]</scope>
    <source>
        <strain>DSM 17950 / CFBP 7177 / CIP 109463 / NCPPB 4357 / Et1/99</strain>
    </source>
</reference>
<sequence length="195" mass="21438">MSRIKLIVGLANPGAEYAATRHNAGAWYADLLAERHNQSLKEESKFFGFTARLNLGGEDVRLLVPTTFMNLSGKAVAAMATFYRIPAEEILVAHDELDLPPGVAKFKQGGGHGGHNGLKDIISRLGNNQNFHRLRIGIGHPGDRQKVVGFVLGKPQAAEQRLIDDAVDEAVRCTEVWMKEDRLKAMNRLHSFKAG</sequence>
<proteinExistence type="inferred from homology"/>
<dbReference type="EC" id="3.1.1.29" evidence="1"/>
<dbReference type="EMBL" id="CU468135">
    <property type="protein sequence ID" value="CAO96931.1"/>
    <property type="molecule type" value="Genomic_DNA"/>
</dbReference>
<dbReference type="RefSeq" id="WP_012441615.1">
    <property type="nucleotide sequence ID" value="NC_010694.1"/>
</dbReference>
<dbReference type="SMR" id="B2VEI9"/>
<dbReference type="STRING" id="465817.ETA_18850"/>
<dbReference type="KEGG" id="eta:ETA_18850"/>
<dbReference type="eggNOG" id="COG0193">
    <property type="taxonomic scope" value="Bacteria"/>
</dbReference>
<dbReference type="HOGENOM" id="CLU_062456_3_1_6"/>
<dbReference type="OrthoDB" id="9800507at2"/>
<dbReference type="Proteomes" id="UP000001726">
    <property type="component" value="Chromosome"/>
</dbReference>
<dbReference type="GO" id="GO:0005737">
    <property type="term" value="C:cytoplasm"/>
    <property type="evidence" value="ECO:0007669"/>
    <property type="project" value="UniProtKB-SubCell"/>
</dbReference>
<dbReference type="GO" id="GO:0004045">
    <property type="term" value="F:peptidyl-tRNA hydrolase activity"/>
    <property type="evidence" value="ECO:0007669"/>
    <property type="project" value="UniProtKB-UniRule"/>
</dbReference>
<dbReference type="GO" id="GO:0000049">
    <property type="term" value="F:tRNA binding"/>
    <property type="evidence" value="ECO:0007669"/>
    <property type="project" value="UniProtKB-UniRule"/>
</dbReference>
<dbReference type="GO" id="GO:0006515">
    <property type="term" value="P:protein quality control for misfolded or incompletely synthesized proteins"/>
    <property type="evidence" value="ECO:0007669"/>
    <property type="project" value="UniProtKB-UniRule"/>
</dbReference>
<dbReference type="GO" id="GO:0072344">
    <property type="term" value="P:rescue of stalled ribosome"/>
    <property type="evidence" value="ECO:0007669"/>
    <property type="project" value="UniProtKB-UniRule"/>
</dbReference>
<dbReference type="CDD" id="cd00462">
    <property type="entry name" value="PTH"/>
    <property type="match status" value="1"/>
</dbReference>
<dbReference type="FunFam" id="3.40.50.1470:FF:000001">
    <property type="entry name" value="Peptidyl-tRNA hydrolase"/>
    <property type="match status" value="1"/>
</dbReference>
<dbReference type="Gene3D" id="3.40.50.1470">
    <property type="entry name" value="Peptidyl-tRNA hydrolase"/>
    <property type="match status" value="1"/>
</dbReference>
<dbReference type="HAMAP" id="MF_00083">
    <property type="entry name" value="Pept_tRNA_hydro_bact"/>
    <property type="match status" value="1"/>
</dbReference>
<dbReference type="InterPro" id="IPR001328">
    <property type="entry name" value="Pept_tRNA_hydro"/>
</dbReference>
<dbReference type="InterPro" id="IPR018171">
    <property type="entry name" value="Pept_tRNA_hydro_CS"/>
</dbReference>
<dbReference type="InterPro" id="IPR036416">
    <property type="entry name" value="Pept_tRNA_hydro_sf"/>
</dbReference>
<dbReference type="NCBIfam" id="TIGR00447">
    <property type="entry name" value="pth"/>
    <property type="match status" value="1"/>
</dbReference>
<dbReference type="PANTHER" id="PTHR17224">
    <property type="entry name" value="PEPTIDYL-TRNA HYDROLASE"/>
    <property type="match status" value="1"/>
</dbReference>
<dbReference type="PANTHER" id="PTHR17224:SF1">
    <property type="entry name" value="PEPTIDYL-TRNA HYDROLASE"/>
    <property type="match status" value="1"/>
</dbReference>
<dbReference type="Pfam" id="PF01195">
    <property type="entry name" value="Pept_tRNA_hydro"/>
    <property type="match status" value="1"/>
</dbReference>
<dbReference type="SUPFAM" id="SSF53178">
    <property type="entry name" value="Peptidyl-tRNA hydrolase-like"/>
    <property type="match status" value="1"/>
</dbReference>
<dbReference type="PROSITE" id="PS01195">
    <property type="entry name" value="PEPT_TRNA_HYDROL_1"/>
    <property type="match status" value="1"/>
</dbReference>
<dbReference type="PROSITE" id="PS01196">
    <property type="entry name" value="PEPT_TRNA_HYDROL_2"/>
    <property type="match status" value="1"/>
</dbReference>